<comment type="function">
    <text evidence="1">NDH shuttles electrons from NAD(P)H:plastoquinone, via FMN and iron-sulfur (Fe-S) centers, to quinones in the photosynthetic chain and possibly in a chloroplast respiratory chain. The immediate electron acceptor for the enzyme in this species is believed to be plastoquinone. Couples the redox reaction to proton translocation, and thus conserves the redox energy in a proton gradient.</text>
</comment>
<comment type="catalytic activity">
    <reaction evidence="1">
        <text>a plastoquinone + NADH + (n+1) H(+)(in) = a plastoquinol + NAD(+) + n H(+)(out)</text>
        <dbReference type="Rhea" id="RHEA:42608"/>
        <dbReference type="Rhea" id="RHEA-COMP:9561"/>
        <dbReference type="Rhea" id="RHEA-COMP:9562"/>
        <dbReference type="ChEBI" id="CHEBI:15378"/>
        <dbReference type="ChEBI" id="CHEBI:17757"/>
        <dbReference type="ChEBI" id="CHEBI:57540"/>
        <dbReference type="ChEBI" id="CHEBI:57945"/>
        <dbReference type="ChEBI" id="CHEBI:62192"/>
    </reaction>
</comment>
<comment type="catalytic activity">
    <reaction evidence="1">
        <text>a plastoquinone + NADPH + (n+1) H(+)(in) = a plastoquinol + NADP(+) + n H(+)(out)</text>
        <dbReference type="Rhea" id="RHEA:42612"/>
        <dbReference type="Rhea" id="RHEA-COMP:9561"/>
        <dbReference type="Rhea" id="RHEA-COMP:9562"/>
        <dbReference type="ChEBI" id="CHEBI:15378"/>
        <dbReference type="ChEBI" id="CHEBI:17757"/>
        <dbReference type="ChEBI" id="CHEBI:57783"/>
        <dbReference type="ChEBI" id="CHEBI:58349"/>
        <dbReference type="ChEBI" id="CHEBI:62192"/>
    </reaction>
</comment>
<comment type="subunit">
    <text evidence="1">NDH is composed of at least 16 different subunits, 5 of which are encoded in the nucleus.</text>
</comment>
<comment type="subcellular location">
    <subcellularLocation>
        <location evidence="1">Plastid</location>
        <location evidence="1">Chloroplast thylakoid membrane</location>
        <topology evidence="1">Multi-pass membrane protein</topology>
    </subcellularLocation>
</comment>
<comment type="similarity">
    <text evidence="1">Belongs to the complex I subunit 4L family.</text>
</comment>
<accession>A4QJY4</accession>
<protein>
    <recommendedName>
        <fullName evidence="1">NAD(P)H-quinone oxidoreductase subunit 4L, chloroplastic</fullName>
        <ecNumber evidence="1">7.1.1.-</ecNumber>
    </recommendedName>
    <alternativeName>
        <fullName evidence="1">NAD(P)H dehydrogenase subunit 4L</fullName>
    </alternativeName>
    <alternativeName>
        <fullName evidence="1">NADH-plastoquinone oxidoreductase subunit 4L</fullName>
    </alternativeName>
</protein>
<reference key="1">
    <citation type="submission" date="2007-03" db="EMBL/GenBank/DDBJ databases">
        <title>Sequence analysis of Arabidopsis pumila JS2 chloroplast DNA.</title>
        <authorList>
            <person name="Hosouchi T."/>
            <person name="Tsuruoka H."/>
            <person name="Kotani H."/>
        </authorList>
    </citation>
    <scope>NUCLEOTIDE SEQUENCE [LARGE SCALE GENOMIC DNA]</scope>
</reference>
<proteinExistence type="inferred from homology"/>
<keyword id="KW-0150">Chloroplast</keyword>
<keyword id="KW-0472">Membrane</keyword>
<keyword id="KW-0520">NAD</keyword>
<keyword id="KW-0521">NADP</keyword>
<keyword id="KW-0934">Plastid</keyword>
<keyword id="KW-0618">Plastoquinone</keyword>
<keyword id="KW-0874">Quinone</keyword>
<keyword id="KW-0793">Thylakoid</keyword>
<keyword id="KW-1278">Translocase</keyword>
<keyword id="KW-0812">Transmembrane</keyword>
<keyword id="KW-1133">Transmembrane helix</keyword>
<keyword id="KW-0813">Transport</keyword>
<dbReference type="EC" id="7.1.1.-" evidence="1"/>
<dbReference type="EMBL" id="AP009368">
    <property type="protein sequence ID" value="BAF49992.1"/>
    <property type="molecule type" value="Genomic_DNA"/>
</dbReference>
<dbReference type="RefSeq" id="YP_001123167.1">
    <property type="nucleotide sequence ID" value="NC_009267.1"/>
</dbReference>
<dbReference type="SMR" id="A4QJY4"/>
<dbReference type="GeneID" id="4962395"/>
<dbReference type="GO" id="GO:0009535">
    <property type="term" value="C:chloroplast thylakoid membrane"/>
    <property type="evidence" value="ECO:0007669"/>
    <property type="project" value="UniProtKB-SubCell"/>
</dbReference>
<dbReference type="GO" id="GO:0030964">
    <property type="term" value="C:NADH dehydrogenase complex"/>
    <property type="evidence" value="ECO:0007669"/>
    <property type="project" value="TreeGrafter"/>
</dbReference>
<dbReference type="GO" id="GO:0016655">
    <property type="term" value="F:oxidoreductase activity, acting on NAD(P)H, quinone or similar compound as acceptor"/>
    <property type="evidence" value="ECO:0007669"/>
    <property type="project" value="UniProtKB-UniRule"/>
</dbReference>
<dbReference type="GO" id="GO:0048038">
    <property type="term" value="F:quinone binding"/>
    <property type="evidence" value="ECO:0007669"/>
    <property type="project" value="UniProtKB-KW"/>
</dbReference>
<dbReference type="GO" id="GO:0042773">
    <property type="term" value="P:ATP synthesis coupled electron transport"/>
    <property type="evidence" value="ECO:0007669"/>
    <property type="project" value="InterPro"/>
</dbReference>
<dbReference type="GO" id="GO:0019684">
    <property type="term" value="P:photosynthesis, light reaction"/>
    <property type="evidence" value="ECO:0007669"/>
    <property type="project" value="UniProtKB-UniRule"/>
</dbReference>
<dbReference type="FunFam" id="1.10.287.3510:FF:000001">
    <property type="entry name" value="NADH-quinone oxidoreductase subunit K"/>
    <property type="match status" value="1"/>
</dbReference>
<dbReference type="Gene3D" id="1.10.287.3510">
    <property type="match status" value="1"/>
</dbReference>
<dbReference type="HAMAP" id="MF_01456">
    <property type="entry name" value="NDH1_NuoK"/>
    <property type="match status" value="1"/>
</dbReference>
<dbReference type="InterPro" id="IPR001133">
    <property type="entry name" value="NADH_UbQ_OxRdtase_chain4L/K"/>
</dbReference>
<dbReference type="InterPro" id="IPR039428">
    <property type="entry name" value="NUOK/Mnh_C1-like"/>
</dbReference>
<dbReference type="NCBIfam" id="NF004320">
    <property type="entry name" value="PRK05715.1-2"/>
    <property type="match status" value="1"/>
</dbReference>
<dbReference type="NCBIfam" id="NF004323">
    <property type="entry name" value="PRK05715.1-5"/>
    <property type="match status" value="1"/>
</dbReference>
<dbReference type="PANTHER" id="PTHR11434:SF16">
    <property type="entry name" value="NADH-UBIQUINONE OXIDOREDUCTASE CHAIN 4L"/>
    <property type="match status" value="1"/>
</dbReference>
<dbReference type="PANTHER" id="PTHR11434">
    <property type="entry name" value="NADH-UBIQUINONE OXIDOREDUCTASE SUBUNIT ND4L"/>
    <property type="match status" value="1"/>
</dbReference>
<dbReference type="Pfam" id="PF00420">
    <property type="entry name" value="Oxidored_q2"/>
    <property type="match status" value="1"/>
</dbReference>
<name>NU4LC_OLIPU</name>
<evidence type="ECO:0000255" key="1">
    <source>
        <dbReference type="HAMAP-Rule" id="MF_01456"/>
    </source>
</evidence>
<sequence length="101" mass="11292">MILEHVLVLSAYLFLIGLYGLIMSRNMVRALMCLELILNAVNMNFVTFSDFFDNSQLKGDIFCIFVIAIAAAEAAIGLAIVSSIYRNRKSTRINQSTLLNK</sequence>
<organism>
    <name type="scientific">Olimarabidopsis pumila</name>
    <name type="common">Dwarf rocket</name>
    <name type="synonym">Arabidopsis griffithiana</name>
    <dbReference type="NCBI Taxonomy" id="74718"/>
    <lineage>
        <taxon>Eukaryota</taxon>
        <taxon>Viridiplantae</taxon>
        <taxon>Streptophyta</taxon>
        <taxon>Embryophyta</taxon>
        <taxon>Tracheophyta</taxon>
        <taxon>Spermatophyta</taxon>
        <taxon>Magnoliopsida</taxon>
        <taxon>eudicotyledons</taxon>
        <taxon>Gunneridae</taxon>
        <taxon>Pentapetalae</taxon>
        <taxon>rosids</taxon>
        <taxon>malvids</taxon>
        <taxon>Brassicales</taxon>
        <taxon>Brassicaceae</taxon>
        <taxon>Alyssopsideae</taxon>
        <taxon>Olimarabidopsis</taxon>
    </lineage>
</organism>
<gene>
    <name evidence="1" type="primary">ndhE</name>
</gene>
<geneLocation type="chloroplast"/>
<feature type="chain" id="PRO_0000360356" description="NAD(P)H-quinone oxidoreductase subunit 4L, chloroplastic">
    <location>
        <begin position="1"/>
        <end position="101"/>
    </location>
</feature>
<feature type="transmembrane region" description="Helical" evidence="1">
    <location>
        <begin position="2"/>
        <end position="22"/>
    </location>
</feature>
<feature type="transmembrane region" description="Helical" evidence="1">
    <location>
        <begin position="32"/>
        <end position="52"/>
    </location>
</feature>
<feature type="transmembrane region" description="Helical" evidence="1">
    <location>
        <begin position="61"/>
        <end position="81"/>
    </location>
</feature>